<dbReference type="EC" id="4.6.1.12" evidence="1"/>
<dbReference type="EMBL" id="CP000526">
    <property type="protein sequence ID" value="ABM50948.1"/>
    <property type="molecule type" value="Genomic_DNA"/>
</dbReference>
<dbReference type="RefSeq" id="WP_004191369.1">
    <property type="nucleotide sequence ID" value="NC_008785.1"/>
</dbReference>
<dbReference type="SMR" id="A1V4Z9"/>
<dbReference type="GeneID" id="93060627"/>
<dbReference type="KEGG" id="bmv:BMASAVP1_A1986"/>
<dbReference type="HOGENOM" id="CLU_084630_2_0_4"/>
<dbReference type="UniPathway" id="UPA00056">
    <property type="reaction ID" value="UER00095"/>
</dbReference>
<dbReference type="GO" id="GO:0008685">
    <property type="term" value="F:2-C-methyl-D-erythritol 2,4-cyclodiphosphate synthase activity"/>
    <property type="evidence" value="ECO:0007669"/>
    <property type="project" value="UniProtKB-UniRule"/>
</dbReference>
<dbReference type="GO" id="GO:0046872">
    <property type="term" value="F:metal ion binding"/>
    <property type="evidence" value="ECO:0007669"/>
    <property type="project" value="UniProtKB-KW"/>
</dbReference>
<dbReference type="GO" id="GO:0019288">
    <property type="term" value="P:isopentenyl diphosphate biosynthetic process, methylerythritol 4-phosphate pathway"/>
    <property type="evidence" value="ECO:0007669"/>
    <property type="project" value="UniProtKB-UniRule"/>
</dbReference>
<dbReference type="GO" id="GO:0016114">
    <property type="term" value="P:terpenoid biosynthetic process"/>
    <property type="evidence" value="ECO:0007669"/>
    <property type="project" value="InterPro"/>
</dbReference>
<dbReference type="CDD" id="cd00554">
    <property type="entry name" value="MECDP_synthase"/>
    <property type="match status" value="1"/>
</dbReference>
<dbReference type="FunFam" id="3.30.1330.50:FF:000001">
    <property type="entry name" value="2-C-methyl-D-erythritol 2,4-cyclodiphosphate synthase"/>
    <property type="match status" value="1"/>
</dbReference>
<dbReference type="Gene3D" id="3.30.1330.50">
    <property type="entry name" value="2-C-methyl-D-erythritol 2,4-cyclodiphosphate synthase"/>
    <property type="match status" value="1"/>
</dbReference>
<dbReference type="HAMAP" id="MF_00107">
    <property type="entry name" value="IspF"/>
    <property type="match status" value="1"/>
</dbReference>
<dbReference type="InterPro" id="IPR003526">
    <property type="entry name" value="MECDP_synthase"/>
</dbReference>
<dbReference type="InterPro" id="IPR020555">
    <property type="entry name" value="MECDP_synthase_CS"/>
</dbReference>
<dbReference type="InterPro" id="IPR036571">
    <property type="entry name" value="MECDP_synthase_sf"/>
</dbReference>
<dbReference type="NCBIfam" id="TIGR00151">
    <property type="entry name" value="ispF"/>
    <property type="match status" value="1"/>
</dbReference>
<dbReference type="PANTHER" id="PTHR43181">
    <property type="entry name" value="2-C-METHYL-D-ERYTHRITOL 2,4-CYCLODIPHOSPHATE SYNTHASE, CHLOROPLASTIC"/>
    <property type="match status" value="1"/>
</dbReference>
<dbReference type="PANTHER" id="PTHR43181:SF1">
    <property type="entry name" value="2-C-METHYL-D-ERYTHRITOL 2,4-CYCLODIPHOSPHATE SYNTHASE, CHLOROPLASTIC"/>
    <property type="match status" value="1"/>
</dbReference>
<dbReference type="Pfam" id="PF02542">
    <property type="entry name" value="YgbB"/>
    <property type="match status" value="1"/>
</dbReference>
<dbReference type="SUPFAM" id="SSF69765">
    <property type="entry name" value="IpsF-like"/>
    <property type="match status" value="1"/>
</dbReference>
<dbReference type="PROSITE" id="PS01350">
    <property type="entry name" value="ISPF"/>
    <property type="match status" value="1"/>
</dbReference>
<sequence>MDFRIGQGYDVHQLVPGRPLIIGGVTIPYERGLLGHSDADVLLHAITDALFGAAALGDIGRHFSDTDPRFKGADSRALLRECASRVAQAGFAIRNVDSTIIAQAPKLAPHIDAMRANIAADLDLPLDRVNVKAKTNEKLGYLGRGEGIEAQAAALVVREAAA</sequence>
<feature type="chain" id="PRO_1000022814" description="2-C-methyl-D-erythritol 2,4-cyclodiphosphate synthase">
    <location>
        <begin position="1"/>
        <end position="162"/>
    </location>
</feature>
<feature type="binding site" evidence="1">
    <location>
        <begin position="10"/>
        <end position="12"/>
    </location>
    <ligand>
        <name>4-CDP-2-C-methyl-D-erythritol 2-phosphate</name>
        <dbReference type="ChEBI" id="CHEBI:57919"/>
    </ligand>
</feature>
<feature type="binding site" evidence="1">
    <location>
        <position position="10"/>
    </location>
    <ligand>
        <name>a divalent metal cation</name>
        <dbReference type="ChEBI" id="CHEBI:60240"/>
    </ligand>
</feature>
<feature type="binding site" evidence="1">
    <location>
        <position position="12"/>
    </location>
    <ligand>
        <name>a divalent metal cation</name>
        <dbReference type="ChEBI" id="CHEBI:60240"/>
    </ligand>
</feature>
<feature type="binding site" evidence="1">
    <location>
        <begin position="36"/>
        <end position="37"/>
    </location>
    <ligand>
        <name>4-CDP-2-C-methyl-D-erythritol 2-phosphate</name>
        <dbReference type="ChEBI" id="CHEBI:57919"/>
    </ligand>
</feature>
<feature type="binding site" evidence="1">
    <location>
        <position position="44"/>
    </location>
    <ligand>
        <name>a divalent metal cation</name>
        <dbReference type="ChEBI" id="CHEBI:60240"/>
    </ligand>
</feature>
<feature type="binding site" evidence="1">
    <location>
        <begin position="58"/>
        <end position="60"/>
    </location>
    <ligand>
        <name>4-CDP-2-C-methyl-D-erythritol 2-phosphate</name>
        <dbReference type="ChEBI" id="CHEBI:57919"/>
    </ligand>
</feature>
<feature type="binding site" evidence="1">
    <location>
        <begin position="63"/>
        <end position="67"/>
    </location>
    <ligand>
        <name>4-CDP-2-C-methyl-D-erythritol 2-phosphate</name>
        <dbReference type="ChEBI" id="CHEBI:57919"/>
    </ligand>
</feature>
<feature type="binding site" evidence="1">
    <location>
        <position position="144"/>
    </location>
    <ligand>
        <name>4-CDP-2-C-methyl-D-erythritol 2-phosphate</name>
        <dbReference type="ChEBI" id="CHEBI:57919"/>
    </ligand>
</feature>
<feature type="site" description="Transition state stabilizer" evidence="1">
    <location>
        <position position="36"/>
    </location>
</feature>
<feature type="site" description="Transition state stabilizer" evidence="1">
    <location>
        <position position="135"/>
    </location>
</feature>
<reference key="1">
    <citation type="journal article" date="2010" name="Genome Biol. Evol.">
        <title>Continuing evolution of Burkholderia mallei through genome reduction and large-scale rearrangements.</title>
        <authorList>
            <person name="Losada L."/>
            <person name="Ronning C.M."/>
            <person name="DeShazer D."/>
            <person name="Woods D."/>
            <person name="Fedorova N."/>
            <person name="Kim H.S."/>
            <person name="Shabalina S.A."/>
            <person name="Pearson T.R."/>
            <person name="Brinkac L."/>
            <person name="Tan P."/>
            <person name="Nandi T."/>
            <person name="Crabtree J."/>
            <person name="Badger J."/>
            <person name="Beckstrom-Sternberg S."/>
            <person name="Saqib M."/>
            <person name="Schutzer S.E."/>
            <person name="Keim P."/>
            <person name="Nierman W.C."/>
        </authorList>
    </citation>
    <scope>NUCLEOTIDE SEQUENCE [LARGE SCALE GENOMIC DNA]</scope>
    <source>
        <strain>SAVP1</strain>
    </source>
</reference>
<evidence type="ECO:0000255" key="1">
    <source>
        <dbReference type="HAMAP-Rule" id="MF_00107"/>
    </source>
</evidence>
<keyword id="KW-0414">Isoprene biosynthesis</keyword>
<keyword id="KW-0456">Lyase</keyword>
<keyword id="KW-0479">Metal-binding</keyword>
<accession>A1V4Z9</accession>
<protein>
    <recommendedName>
        <fullName evidence="1">2-C-methyl-D-erythritol 2,4-cyclodiphosphate synthase</fullName>
        <shortName evidence="1">MECDP-synthase</shortName>
        <shortName evidence="1">MECPP-synthase</shortName>
        <shortName evidence="1">MECPS</shortName>
        <ecNumber evidence="1">4.6.1.12</ecNumber>
    </recommendedName>
</protein>
<proteinExistence type="inferred from homology"/>
<organism>
    <name type="scientific">Burkholderia mallei (strain SAVP1)</name>
    <dbReference type="NCBI Taxonomy" id="320388"/>
    <lineage>
        <taxon>Bacteria</taxon>
        <taxon>Pseudomonadati</taxon>
        <taxon>Pseudomonadota</taxon>
        <taxon>Betaproteobacteria</taxon>
        <taxon>Burkholderiales</taxon>
        <taxon>Burkholderiaceae</taxon>
        <taxon>Burkholderia</taxon>
        <taxon>pseudomallei group</taxon>
    </lineage>
</organism>
<name>ISPF_BURMS</name>
<gene>
    <name evidence="1" type="primary">ispF</name>
    <name type="ordered locus">BMASAVP1_A1986</name>
</gene>
<comment type="function">
    <text evidence="1">Involved in the biosynthesis of isopentenyl diphosphate (IPP) and dimethylallyl diphosphate (DMAPP), two major building blocks of isoprenoid compounds. Catalyzes the conversion of 4-diphosphocytidyl-2-C-methyl-D-erythritol 2-phosphate (CDP-ME2P) to 2-C-methyl-D-erythritol 2,4-cyclodiphosphate (ME-CPP) with a corresponding release of cytidine 5-monophosphate (CMP).</text>
</comment>
<comment type="catalytic activity">
    <reaction evidence="1">
        <text>4-CDP-2-C-methyl-D-erythritol 2-phosphate = 2-C-methyl-D-erythritol 2,4-cyclic diphosphate + CMP</text>
        <dbReference type="Rhea" id="RHEA:23864"/>
        <dbReference type="ChEBI" id="CHEBI:57919"/>
        <dbReference type="ChEBI" id="CHEBI:58483"/>
        <dbReference type="ChEBI" id="CHEBI:60377"/>
        <dbReference type="EC" id="4.6.1.12"/>
    </reaction>
</comment>
<comment type="cofactor">
    <cofactor evidence="1">
        <name>a divalent metal cation</name>
        <dbReference type="ChEBI" id="CHEBI:60240"/>
    </cofactor>
    <text evidence="1">Binds 1 divalent metal cation per subunit.</text>
</comment>
<comment type="pathway">
    <text evidence="1">Isoprenoid biosynthesis; isopentenyl diphosphate biosynthesis via DXP pathway; isopentenyl diphosphate from 1-deoxy-D-xylulose 5-phosphate: step 4/6.</text>
</comment>
<comment type="subunit">
    <text evidence="1">Homotrimer.</text>
</comment>
<comment type="similarity">
    <text evidence="1">Belongs to the IspF family.</text>
</comment>